<feature type="chain" id="PRO_1000056353" description="Beta-ketoacyl-[acyl-carrier-protein] synthase III">
    <location>
        <begin position="1"/>
        <end position="330"/>
    </location>
</feature>
<feature type="region of interest" description="ACP-binding" evidence="1">
    <location>
        <begin position="258"/>
        <end position="262"/>
    </location>
</feature>
<feature type="active site" evidence="1">
    <location>
        <position position="114"/>
    </location>
</feature>
<feature type="active site" evidence="1">
    <location>
        <position position="257"/>
    </location>
</feature>
<feature type="active site" evidence="1">
    <location>
        <position position="287"/>
    </location>
</feature>
<reference key="1">
    <citation type="journal article" date="2009" name="Environ. Microbiol.">
        <title>Contribution of mobile genetic elements to Desulfovibrio vulgaris genome plasticity.</title>
        <authorList>
            <person name="Walker C.B."/>
            <person name="Stolyar S."/>
            <person name="Chivian D."/>
            <person name="Pinel N."/>
            <person name="Gabster J.A."/>
            <person name="Dehal P.S."/>
            <person name="He Z."/>
            <person name="Yang Z.K."/>
            <person name="Yen H.C."/>
            <person name="Zhou J."/>
            <person name="Wall J.D."/>
            <person name="Hazen T.C."/>
            <person name="Arkin A.P."/>
            <person name="Stahl D.A."/>
        </authorList>
    </citation>
    <scope>NUCLEOTIDE SEQUENCE [LARGE SCALE GENOMIC DNA]</scope>
    <source>
        <strain>DP4</strain>
    </source>
</reference>
<organism>
    <name type="scientific">Nitratidesulfovibrio vulgaris (strain DP4)</name>
    <name type="common">Desulfovibrio vulgaris</name>
    <dbReference type="NCBI Taxonomy" id="391774"/>
    <lineage>
        <taxon>Bacteria</taxon>
        <taxon>Pseudomonadati</taxon>
        <taxon>Thermodesulfobacteriota</taxon>
        <taxon>Desulfovibrionia</taxon>
        <taxon>Desulfovibrionales</taxon>
        <taxon>Desulfovibrionaceae</taxon>
        <taxon>Nitratidesulfovibrio</taxon>
    </lineage>
</organism>
<protein>
    <recommendedName>
        <fullName evidence="1">Beta-ketoacyl-[acyl-carrier-protein] synthase III</fullName>
        <shortName evidence="1">Beta-ketoacyl-ACP synthase III</shortName>
        <shortName evidence="1">KAS III</shortName>
        <ecNumber evidence="1">2.3.1.180</ecNumber>
    </recommendedName>
    <alternativeName>
        <fullName evidence="1">3-oxoacyl-[acyl-carrier-protein] synthase 3</fullName>
    </alternativeName>
    <alternativeName>
        <fullName evidence="1">3-oxoacyl-[acyl-carrier-protein] synthase III</fullName>
    </alternativeName>
</protein>
<accession>A1VEK1</accession>
<comment type="function">
    <text evidence="1">Catalyzes the condensation reaction of fatty acid synthesis by the addition to an acyl acceptor of two carbons from malonyl-ACP. Catalyzes the first condensation reaction which initiates fatty acid synthesis and may therefore play a role in governing the total rate of fatty acid production. Possesses both acetoacetyl-ACP synthase and acetyl transacylase activities. Its substrate specificity determines the biosynthesis of branched-chain and/or straight-chain of fatty acids.</text>
</comment>
<comment type="catalytic activity">
    <reaction evidence="1">
        <text>malonyl-[ACP] + acetyl-CoA + H(+) = 3-oxobutanoyl-[ACP] + CO2 + CoA</text>
        <dbReference type="Rhea" id="RHEA:12080"/>
        <dbReference type="Rhea" id="RHEA-COMP:9623"/>
        <dbReference type="Rhea" id="RHEA-COMP:9625"/>
        <dbReference type="ChEBI" id="CHEBI:15378"/>
        <dbReference type="ChEBI" id="CHEBI:16526"/>
        <dbReference type="ChEBI" id="CHEBI:57287"/>
        <dbReference type="ChEBI" id="CHEBI:57288"/>
        <dbReference type="ChEBI" id="CHEBI:78449"/>
        <dbReference type="ChEBI" id="CHEBI:78450"/>
        <dbReference type="EC" id="2.3.1.180"/>
    </reaction>
</comment>
<comment type="pathway">
    <text evidence="1">Lipid metabolism; fatty acid biosynthesis.</text>
</comment>
<comment type="subunit">
    <text evidence="1">Homodimer.</text>
</comment>
<comment type="subcellular location">
    <subcellularLocation>
        <location evidence="1">Cytoplasm</location>
    </subcellularLocation>
</comment>
<comment type="domain">
    <text evidence="1">The last Arg residue of the ACP-binding site is essential for the weak association between ACP/AcpP and FabH.</text>
</comment>
<comment type="similarity">
    <text evidence="1">Belongs to the thiolase-like superfamily. FabH family.</text>
</comment>
<proteinExistence type="inferred from homology"/>
<evidence type="ECO:0000255" key="1">
    <source>
        <dbReference type="HAMAP-Rule" id="MF_01815"/>
    </source>
</evidence>
<dbReference type="EC" id="2.3.1.180" evidence="1"/>
<dbReference type="EMBL" id="CP000527">
    <property type="protein sequence ID" value="ABM28867.1"/>
    <property type="molecule type" value="Genomic_DNA"/>
</dbReference>
<dbReference type="RefSeq" id="WP_010938503.1">
    <property type="nucleotide sequence ID" value="NC_008751.1"/>
</dbReference>
<dbReference type="SMR" id="A1VEK1"/>
<dbReference type="KEGG" id="dvl:Dvul_1850"/>
<dbReference type="HOGENOM" id="CLU_039592_4_1_7"/>
<dbReference type="UniPathway" id="UPA00094"/>
<dbReference type="Proteomes" id="UP000009173">
    <property type="component" value="Chromosome"/>
</dbReference>
<dbReference type="GO" id="GO:0005737">
    <property type="term" value="C:cytoplasm"/>
    <property type="evidence" value="ECO:0007669"/>
    <property type="project" value="UniProtKB-SubCell"/>
</dbReference>
<dbReference type="GO" id="GO:0004315">
    <property type="term" value="F:3-oxoacyl-[acyl-carrier-protein] synthase activity"/>
    <property type="evidence" value="ECO:0007669"/>
    <property type="project" value="InterPro"/>
</dbReference>
<dbReference type="GO" id="GO:0033818">
    <property type="term" value="F:beta-ketoacyl-acyl-carrier-protein synthase III activity"/>
    <property type="evidence" value="ECO:0007669"/>
    <property type="project" value="UniProtKB-UniRule"/>
</dbReference>
<dbReference type="GO" id="GO:0006633">
    <property type="term" value="P:fatty acid biosynthetic process"/>
    <property type="evidence" value="ECO:0007669"/>
    <property type="project" value="UniProtKB-UniRule"/>
</dbReference>
<dbReference type="GO" id="GO:0044550">
    <property type="term" value="P:secondary metabolite biosynthetic process"/>
    <property type="evidence" value="ECO:0007669"/>
    <property type="project" value="TreeGrafter"/>
</dbReference>
<dbReference type="CDD" id="cd00830">
    <property type="entry name" value="KAS_III"/>
    <property type="match status" value="1"/>
</dbReference>
<dbReference type="FunFam" id="3.40.47.10:FF:000004">
    <property type="entry name" value="3-oxoacyl-[acyl-carrier-protein] synthase 3"/>
    <property type="match status" value="1"/>
</dbReference>
<dbReference type="Gene3D" id="3.40.47.10">
    <property type="match status" value="1"/>
</dbReference>
<dbReference type="HAMAP" id="MF_01815">
    <property type="entry name" value="FabH"/>
    <property type="match status" value="1"/>
</dbReference>
<dbReference type="InterPro" id="IPR013747">
    <property type="entry name" value="ACP_syn_III_C"/>
</dbReference>
<dbReference type="InterPro" id="IPR013751">
    <property type="entry name" value="ACP_syn_III_N"/>
</dbReference>
<dbReference type="InterPro" id="IPR004655">
    <property type="entry name" value="FabH"/>
</dbReference>
<dbReference type="InterPro" id="IPR016039">
    <property type="entry name" value="Thiolase-like"/>
</dbReference>
<dbReference type="NCBIfam" id="TIGR00747">
    <property type="entry name" value="fabH"/>
    <property type="match status" value="1"/>
</dbReference>
<dbReference type="NCBIfam" id="NF006829">
    <property type="entry name" value="PRK09352.1"/>
    <property type="match status" value="1"/>
</dbReference>
<dbReference type="PANTHER" id="PTHR34069">
    <property type="entry name" value="3-OXOACYL-[ACYL-CARRIER-PROTEIN] SYNTHASE 3"/>
    <property type="match status" value="1"/>
</dbReference>
<dbReference type="PANTHER" id="PTHR34069:SF2">
    <property type="entry name" value="BETA-KETOACYL-[ACYL-CARRIER-PROTEIN] SYNTHASE III"/>
    <property type="match status" value="1"/>
</dbReference>
<dbReference type="Pfam" id="PF08545">
    <property type="entry name" value="ACP_syn_III"/>
    <property type="match status" value="1"/>
</dbReference>
<dbReference type="Pfam" id="PF08541">
    <property type="entry name" value="ACP_syn_III_C"/>
    <property type="match status" value="1"/>
</dbReference>
<dbReference type="SUPFAM" id="SSF53901">
    <property type="entry name" value="Thiolase-like"/>
    <property type="match status" value="1"/>
</dbReference>
<name>FABH_NITV4</name>
<sequence length="330" mass="34666">MTSPSLLRGFGAYAPERILTNADIESMVETTDEWITTRTGIRQRHVVAPGQTTSDLAVEAARAALADAALDTADITHVLVATCTPDASCPNTACIVARKLGMTGVMALDCNAACSGFLYGLELAQGIVAARPASRVLLVAAEALSLRCNWKDRTTCVLFGDGAGATVVTADVDATQGTAVLEDSIVTSDGSLGDLLTIGGGTANPYAIGDSVGEEYFVRMQGRDVFKHAVRSMTQVCNDLLARNGFTTEDVDLVIPHQANLRIIEAVGDRLGFASEKVFVNVHDFGNTSAASIPLALADARAQGRIRPGMRVLLTTFGGGFTWGAALLRF</sequence>
<keyword id="KW-0012">Acyltransferase</keyword>
<keyword id="KW-0963">Cytoplasm</keyword>
<keyword id="KW-0275">Fatty acid biosynthesis</keyword>
<keyword id="KW-0276">Fatty acid metabolism</keyword>
<keyword id="KW-0444">Lipid biosynthesis</keyword>
<keyword id="KW-0443">Lipid metabolism</keyword>
<keyword id="KW-0511">Multifunctional enzyme</keyword>
<keyword id="KW-0808">Transferase</keyword>
<gene>
    <name evidence="1" type="primary">fabH</name>
    <name type="ordered locus">Dvul_1850</name>
</gene>